<comment type="function">
    <text evidence="1 2">This peptide has moderate activity on some voltage-gated potassium channels. It reversibly inhibits the Shaker voltage-gated potassium channels (Kv) from drosophila (Kd=2.7 uM) (PubMed:28774677). In addition, it also irreversibly inhibits human Kv1.3/KCNA3 (IC(50)=24 uM) and Kv1.6/KCNA6 (IC(50)=2.7 uM) potassium channels (PubMed:32823677).</text>
</comment>
<comment type="subcellular location">
    <subcellularLocation>
        <location evidence="1">Secreted</location>
    </subcellularLocation>
</comment>
<comment type="tissue specificity">
    <text evidence="6">Expressed by the venom duct.</text>
</comment>
<comment type="mass spectrometry" mass="1726.77" method="MALDI" evidence="1">
    <text>Monoisotopic mass.</text>
</comment>
<comment type="miscellaneous">
    <text evidence="1 2">Negative results: does not affect potassium channels from drosophila (Shab, Shaw, and Shal), as well as the human channel Kv10.1/KCNH1/EAG1 (PubMed:28774677). Does not show activity on human Kv1.4/KCNA4 and Kv1.5/KCNA5 (PubMed:32823677).</text>
</comment>
<comment type="miscellaneous">
    <text evidence="5">The mature peptide does not contain cysteine residue.</text>
</comment>
<comment type="similarity">
    <text evidence="5">Belongs to the FARP (FMRFamide related peptide) family.</text>
</comment>
<organism>
    <name type="scientific">Conus spurius</name>
    <name type="common">Alphabet cone</name>
    <dbReference type="NCBI Taxonomy" id="192919"/>
    <lineage>
        <taxon>Eukaryota</taxon>
        <taxon>Metazoa</taxon>
        <taxon>Spiralia</taxon>
        <taxon>Lophotrochozoa</taxon>
        <taxon>Mollusca</taxon>
        <taxon>Gastropoda</taxon>
        <taxon>Caenogastropoda</taxon>
        <taxon>Neogastropoda</taxon>
        <taxon>Conoidea</taxon>
        <taxon>Conidae</taxon>
        <taxon>Conus</taxon>
        <taxon>Lindaconus</taxon>
    </lineage>
</organism>
<sequence length="15" mass="1729">ATSGPMGWLPVFYRF</sequence>
<protein>
    <recommendedName>
        <fullName evidence="3 4">Conorfamide-Sr3</fullName>
        <shortName evidence="3 4">CNF-Sr3</shortName>
    </recommendedName>
    <alternativeName>
        <fullName evidence="3">Cono-RFamide-Sr3</fullName>
    </alternativeName>
</protein>
<proteinExistence type="evidence at protein level"/>
<feature type="peptide" id="PRO_0000446232" description="Conorfamide-Sr3" evidence="1">
    <location>
        <begin position="1"/>
        <end position="15"/>
    </location>
</feature>
<feature type="modified residue" description="Phenylalanine amide" evidence="1">
    <location>
        <position position="15"/>
    </location>
</feature>
<keyword id="KW-0027">Amidation</keyword>
<keyword id="KW-0903">Direct protein sequencing</keyword>
<keyword id="KW-0872">Ion channel impairing toxin</keyword>
<keyword id="KW-0632">Potassium channel impairing toxin</keyword>
<keyword id="KW-0964">Secreted</keyword>
<keyword id="KW-0800">Toxin</keyword>
<keyword id="KW-1220">Voltage-gated potassium channel impairing toxin</keyword>
<dbReference type="ConoServer" id="8699">
    <property type="toxin name" value="Conorfamide-Sr3"/>
</dbReference>
<dbReference type="GO" id="GO:0005576">
    <property type="term" value="C:extracellular region"/>
    <property type="evidence" value="ECO:0007669"/>
    <property type="project" value="UniProtKB-SubCell"/>
</dbReference>
<dbReference type="GO" id="GO:0015459">
    <property type="term" value="F:potassium channel regulator activity"/>
    <property type="evidence" value="ECO:0007669"/>
    <property type="project" value="UniProtKB-KW"/>
</dbReference>
<dbReference type="GO" id="GO:0090729">
    <property type="term" value="F:toxin activity"/>
    <property type="evidence" value="ECO:0007669"/>
    <property type="project" value="UniProtKB-KW"/>
</dbReference>
<name>CRFA3_CONSP</name>
<reference key="1">
    <citation type="journal article" date="2017" name="Toxicon">
        <title>Conorfamide-Sr3, a structurally novel specific inhibitor of the Shaker K+ channel.</title>
        <authorList>
            <person name="Campos-Lira E."/>
            <person name="Carrillo E."/>
            <person name="Aguilar M.B."/>
            <person name="Gajewiak J."/>
            <person name="Gomez-Lagunas F."/>
            <person name="Lopez-Vera E."/>
        </authorList>
    </citation>
    <scope>PROTEIN SEQUENCE</scope>
    <scope>FUNCTION</scope>
    <scope>SYNTHESIS</scope>
    <scope>MASS SPECTROMETRY</scope>
    <scope>AMIDATION AT PHE-15</scope>
    <source>
        <tissue>Venom</tissue>
    </source>
</reference>
<reference key="2">
    <citation type="journal article" date="2020" name="Mar. Drugs">
        <title>Studies of conorfamide-Sr3 on human voltage-gated Kv1 potassium channel subtypes.</title>
        <authorList>
            <person name="Lopez-Vera E."/>
            <person name="Martinez-Hernandez L."/>
            <person name="Aguilar M.B."/>
            <person name="Carrillo E."/>
            <person name="Gajewiak J."/>
        </authorList>
    </citation>
    <scope>FUNCTION</scope>
</reference>
<evidence type="ECO:0000269" key="1">
    <source>
    </source>
</evidence>
<evidence type="ECO:0000269" key="2">
    <source>
    </source>
</evidence>
<evidence type="ECO:0000303" key="3">
    <source>
    </source>
</evidence>
<evidence type="ECO:0000303" key="4">
    <source>
    </source>
</evidence>
<evidence type="ECO:0000305" key="5"/>
<evidence type="ECO:0000305" key="6">
    <source>
    </source>
</evidence>
<accession>P0DM28</accession>